<reference key="1">
    <citation type="journal article" date="2005" name="Genome Biol.">
        <title>Full-length cDNAs from chicken bursal lymphocytes to facilitate gene function analysis.</title>
        <authorList>
            <person name="Caldwell R.B."/>
            <person name="Kierzek A.M."/>
            <person name="Arakawa H."/>
            <person name="Bezzubov Y."/>
            <person name="Zaim J."/>
            <person name="Fiedler P."/>
            <person name="Kutter S."/>
            <person name="Blagodatski A."/>
            <person name="Kostovska D."/>
            <person name="Koter M."/>
            <person name="Plachy J."/>
            <person name="Carninci P."/>
            <person name="Hayashizaki Y."/>
            <person name="Buerstedde J.-M."/>
        </authorList>
    </citation>
    <scope>NUCLEOTIDE SEQUENCE [LARGE SCALE MRNA]</scope>
    <source>
        <strain>CB</strain>
        <tissue>Bursa of Fabricius</tissue>
    </source>
</reference>
<organism>
    <name type="scientific">Gallus gallus</name>
    <name type="common">Chicken</name>
    <dbReference type="NCBI Taxonomy" id="9031"/>
    <lineage>
        <taxon>Eukaryota</taxon>
        <taxon>Metazoa</taxon>
        <taxon>Chordata</taxon>
        <taxon>Craniata</taxon>
        <taxon>Vertebrata</taxon>
        <taxon>Euteleostomi</taxon>
        <taxon>Archelosauria</taxon>
        <taxon>Archosauria</taxon>
        <taxon>Dinosauria</taxon>
        <taxon>Saurischia</taxon>
        <taxon>Theropoda</taxon>
        <taxon>Coelurosauria</taxon>
        <taxon>Aves</taxon>
        <taxon>Neognathae</taxon>
        <taxon>Galloanserae</taxon>
        <taxon>Galliformes</taxon>
        <taxon>Phasianidae</taxon>
        <taxon>Phasianinae</taxon>
        <taxon>Gallus</taxon>
    </lineage>
</organism>
<dbReference type="EMBL" id="AJ720210">
    <property type="protein sequence ID" value="CAG31869.1"/>
    <property type="molecule type" value="mRNA"/>
</dbReference>
<dbReference type="RefSeq" id="NP_001025984.1">
    <property type="nucleotide sequence ID" value="NM_001030813.1"/>
</dbReference>
<dbReference type="SMR" id="Q5ZK74"/>
<dbReference type="FunCoup" id="Q5ZK74">
    <property type="interactions" value="1759"/>
</dbReference>
<dbReference type="STRING" id="9031.ENSGALP00000027066"/>
<dbReference type="PaxDb" id="9031-ENSGALP00000027066"/>
<dbReference type="KEGG" id="gga:418725"/>
<dbReference type="CTD" id="79074"/>
<dbReference type="VEuPathDB" id="HostDB:geneid_418725"/>
<dbReference type="eggNOG" id="ENOG502S0PQ">
    <property type="taxonomic scope" value="Eukaryota"/>
</dbReference>
<dbReference type="InParanoid" id="Q5ZK74"/>
<dbReference type="OrthoDB" id="10071059at2759"/>
<dbReference type="PhylomeDB" id="Q5ZK74"/>
<dbReference type="PRO" id="PR:Q5ZK74"/>
<dbReference type="Proteomes" id="UP000000539">
    <property type="component" value="Unassembled WGS sequence"/>
</dbReference>
<dbReference type="GO" id="GO:0005634">
    <property type="term" value="C:nucleus"/>
    <property type="evidence" value="ECO:0000250"/>
    <property type="project" value="UniProtKB"/>
</dbReference>
<dbReference type="GO" id="GO:0072669">
    <property type="term" value="C:tRNA-splicing ligase complex"/>
    <property type="evidence" value="ECO:0000250"/>
    <property type="project" value="UniProtKB"/>
</dbReference>
<dbReference type="GO" id="GO:0009952">
    <property type="term" value="P:anterior/posterior pattern specification"/>
    <property type="evidence" value="ECO:0000250"/>
    <property type="project" value="AgBase"/>
</dbReference>
<dbReference type="GO" id="GO:0060027">
    <property type="term" value="P:convergent extension involved in gastrulation"/>
    <property type="evidence" value="ECO:0000250"/>
    <property type="project" value="AgBase"/>
</dbReference>
<dbReference type="GO" id="GO:0048598">
    <property type="term" value="P:embryonic morphogenesis"/>
    <property type="evidence" value="ECO:0000250"/>
    <property type="project" value="AgBase"/>
</dbReference>
<dbReference type="GO" id="GO:0042981">
    <property type="term" value="P:regulation of apoptotic process"/>
    <property type="evidence" value="ECO:0000250"/>
    <property type="project" value="AgBase"/>
</dbReference>
<dbReference type="GO" id="GO:0060062">
    <property type="term" value="P:Spemann organizer formation at the dorsal lip of the blastopore"/>
    <property type="evidence" value="ECO:0000250"/>
    <property type="project" value="AgBase"/>
</dbReference>
<dbReference type="InterPro" id="IPR024887">
    <property type="entry name" value="Ashwin"/>
</dbReference>
<dbReference type="PANTHER" id="PTHR28359">
    <property type="entry name" value="ASHWIN"/>
    <property type="match status" value="1"/>
</dbReference>
<dbReference type="PANTHER" id="PTHR28359:SF1">
    <property type="entry name" value="ASHWIN"/>
    <property type="match status" value="1"/>
</dbReference>
<dbReference type="Pfam" id="PF15323">
    <property type="entry name" value="Ashwin"/>
    <property type="match status" value="1"/>
</dbReference>
<feature type="chain" id="PRO_0000268862" description="Ashwin">
    <location>
        <begin position="1"/>
        <end position="241"/>
    </location>
</feature>
<feature type="region of interest" description="Disordered" evidence="2">
    <location>
        <begin position="1"/>
        <end position="21"/>
    </location>
</feature>
<feature type="region of interest" description="Disordered" evidence="2">
    <location>
        <begin position="82"/>
        <end position="102"/>
    </location>
</feature>
<feature type="region of interest" description="Disordered" evidence="2">
    <location>
        <begin position="212"/>
        <end position="241"/>
    </location>
</feature>
<feature type="compositionally biased region" description="Basic and acidic residues" evidence="2">
    <location>
        <begin position="11"/>
        <end position="21"/>
    </location>
</feature>
<name>ASHWN_CHICK</name>
<accession>Q5ZK74</accession>
<gene>
    <name type="ORF">RCJMB04_12m8</name>
</gene>
<protein>
    <recommendedName>
        <fullName>Ashwin</fullName>
    </recommendedName>
</protein>
<comment type="subcellular location">
    <subcellularLocation>
        <location evidence="1">Nucleus</location>
    </subcellularLocation>
</comment>
<comment type="similarity">
    <text evidence="3">Belongs to the ashwin family.</text>
</comment>
<evidence type="ECO:0000250" key="1">
    <source>
        <dbReference type="UniProtKB" id="Q9BVC5"/>
    </source>
</evidence>
<evidence type="ECO:0000256" key="2">
    <source>
        <dbReference type="SAM" id="MobiDB-lite"/>
    </source>
</evidence>
<evidence type="ECO:0000305" key="3"/>
<keyword id="KW-0539">Nucleus</keyword>
<keyword id="KW-1185">Reference proteome</keyword>
<proteinExistence type="evidence at transcript level"/>
<sequence length="241" mass="26536">MAAQGRGRVGGGKEERVSARSDSELLLHPELLSEEFLLLTLEQKNILVKNDVKMDKDGLTDLYIQHAIPLPQRDLPKSRWGKMMEKKRKQNEPKSENKSVTAVGGLRKRPLIVFDGSSTSTSIKVKKTENGATDRLKPPPAGSITNTVRRLSAPSNASTYISASSLSEDAKLEVRNNEAKQNNISKTNSSVLVNLKTHPLSPVAGTTVVKLKRSVPKDESDLPNDLKPTEAKKKIQHCTWP</sequence>